<proteinExistence type="inferred from homology"/>
<accession>P48128</accession>
<geneLocation type="cyanelle"/>
<dbReference type="EMBL" id="U30821">
    <property type="protein sequence ID" value="AAA81318.1"/>
    <property type="molecule type" value="Genomic_DNA"/>
</dbReference>
<dbReference type="PIR" id="T06975">
    <property type="entry name" value="T06975"/>
</dbReference>
<dbReference type="RefSeq" id="NP_043287.1">
    <property type="nucleotide sequence ID" value="NC_001675.1"/>
</dbReference>
<dbReference type="SMR" id="P48128"/>
<dbReference type="GeneID" id="801581"/>
<dbReference type="GO" id="GO:0009842">
    <property type="term" value="C:cyanelle"/>
    <property type="evidence" value="ECO:0007669"/>
    <property type="project" value="UniProtKB-SubCell"/>
</dbReference>
<dbReference type="GO" id="GO:0005762">
    <property type="term" value="C:mitochondrial large ribosomal subunit"/>
    <property type="evidence" value="ECO:0007669"/>
    <property type="project" value="TreeGrafter"/>
</dbReference>
<dbReference type="GO" id="GO:0019843">
    <property type="term" value="F:rRNA binding"/>
    <property type="evidence" value="ECO:0007669"/>
    <property type="project" value="UniProtKB-KW"/>
</dbReference>
<dbReference type="GO" id="GO:0003735">
    <property type="term" value="F:structural constituent of ribosome"/>
    <property type="evidence" value="ECO:0007669"/>
    <property type="project" value="InterPro"/>
</dbReference>
<dbReference type="GO" id="GO:0006412">
    <property type="term" value="P:translation"/>
    <property type="evidence" value="ECO:0007669"/>
    <property type="project" value="InterPro"/>
</dbReference>
<dbReference type="HAMAP" id="MF_01363">
    <property type="entry name" value="Ribosomal_bL21"/>
    <property type="match status" value="1"/>
</dbReference>
<dbReference type="InterPro" id="IPR028909">
    <property type="entry name" value="bL21-like"/>
</dbReference>
<dbReference type="InterPro" id="IPR036164">
    <property type="entry name" value="bL21-like_sf"/>
</dbReference>
<dbReference type="InterPro" id="IPR001787">
    <property type="entry name" value="Ribosomal_bL21"/>
</dbReference>
<dbReference type="InterPro" id="IPR018258">
    <property type="entry name" value="Ribosomal_bL21_CS"/>
</dbReference>
<dbReference type="NCBIfam" id="TIGR00061">
    <property type="entry name" value="L21"/>
    <property type="match status" value="1"/>
</dbReference>
<dbReference type="PANTHER" id="PTHR21349">
    <property type="entry name" value="50S RIBOSOMAL PROTEIN L21"/>
    <property type="match status" value="1"/>
</dbReference>
<dbReference type="PANTHER" id="PTHR21349:SF7">
    <property type="entry name" value="LARGE RIBOSOMAL SUBUNIT PROTEIN BL21C"/>
    <property type="match status" value="1"/>
</dbReference>
<dbReference type="Pfam" id="PF00829">
    <property type="entry name" value="Ribosomal_L21p"/>
    <property type="match status" value="1"/>
</dbReference>
<dbReference type="SUPFAM" id="SSF141091">
    <property type="entry name" value="L21p-like"/>
    <property type="match status" value="1"/>
</dbReference>
<dbReference type="PROSITE" id="PS01169">
    <property type="entry name" value="RIBOSOMAL_L21"/>
    <property type="match status" value="1"/>
</dbReference>
<comment type="function">
    <text evidence="1">This protein binds to 23S rRNA.</text>
</comment>
<comment type="subunit">
    <text evidence="1">Part of the 50S ribosomal subunit.</text>
</comment>
<comment type="subcellular location">
    <subcellularLocation>
        <location>Plastid</location>
        <location>Cyanelle</location>
    </subcellularLocation>
</comment>
<comment type="similarity">
    <text evidence="1">Belongs to the bacterial ribosomal protein bL21 family.</text>
</comment>
<protein>
    <recommendedName>
        <fullName evidence="1">Large ribosomal subunit protein bL21c</fullName>
    </recommendedName>
    <alternativeName>
        <fullName evidence="2">50S ribosomal protein L21, cyanelle</fullName>
    </alternativeName>
</protein>
<sequence length="104" mass="12113">MTTYAIIDIAGKQLWVEPKRYYSVNKINVEIGKKIALQRILLLSKIGEKIKIGQPFLNGISINAIILRHFLAPKVIVYKMQPKKKTRRKRGHRQHLTSFLINDF</sequence>
<reference key="1">
    <citation type="journal article" date="1995" name="Plant Mol. Biol. Rep.">
        <title>Nucleotide sequence of the cyanelle DNA from Cyanophora paradoxa.</title>
        <authorList>
            <person name="Stirewalt V.L."/>
            <person name="Michalowski C.B."/>
            <person name="Loeffelhardt W."/>
            <person name="Bohnert H.J."/>
            <person name="Bryant D.A."/>
        </authorList>
    </citation>
    <scope>NUCLEOTIDE SEQUENCE [LARGE SCALE GENOMIC DNA]</scope>
    <source>
        <strain>UTEX LB 555 / Pringsheim</strain>
    </source>
</reference>
<reference key="2">
    <citation type="book" date="1997" name="Eukaryotism and symbiosis">
        <title>The complete sequence of the cyanelle genome of Cyanophora paradoxa: the genetic complexity of a primitive plastid.</title>
        <editorList>
            <person name="Schenk H.E.A."/>
            <person name="Herrmann R."/>
            <person name="Jeon K.W."/>
            <person name="Mueller N.E."/>
            <person name="Schwemmler W."/>
        </editorList>
        <authorList>
            <person name="Loeffelhardt W."/>
            <person name="Stirewalt V.L."/>
            <person name="Michalowski C.B."/>
            <person name="Annarella M."/>
            <person name="Farley J.Y."/>
            <person name="Schluchter W.M."/>
            <person name="Chung S."/>
            <person name="Newmann-Spallart C."/>
            <person name="Steiner J.M."/>
            <person name="Jakowitsch J."/>
            <person name="Bohnert H.J."/>
            <person name="Bryant D.A."/>
        </authorList>
    </citation>
    <scope>NUCLEOTIDE SEQUENCE [LARGE SCALE GENOMIC DNA]</scope>
    <source>
        <strain>UTEX LB 555 / Pringsheim</strain>
    </source>
</reference>
<gene>
    <name evidence="1" type="primary">rpl21</name>
</gene>
<keyword id="KW-0194">Cyanelle</keyword>
<keyword id="KW-0934">Plastid</keyword>
<keyword id="KW-0687">Ribonucleoprotein</keyword>
<keyword id="KW-0689">Ribosomal protein</keyword>
<keyword id="KW-0694">RNA-binding</keyword>
<keyword id="KW-0699">rRNA-binding</keyword>
<organism>
    <name type="scientific">Cyanophora paradoxa</name>
    <dbReference type="NCBI Taxonomy" id="2762"/>
    <lineage>
        <taxon>Eukaryota</taxon>
        <taxon>Glaucocystophyceae</taxon>
        <taxon>Cyanophoraceae</taxon>
        <taxon>Cyanophora</taxon>
    </lineage>
</organism>
<feature type="chain" id="PRO_0000181020" description="Large ribosomal subunit protein bL21c">
    <location>
        <begin position="1"/>
        <end position="104"/>
    </location>
</feature>
<name>RK21_CYAPA</name>
<evidence type="ECO:0000255" key="1">
    <source>
        <dbReference type="HAMAP-Rule" id="MF_01363"/>
    </source>
</evidence>
<evidence type="ECO:0000305" key="2"/>